<accession>Q7NQE5</accession>
<feature type="chain" id="PRO_0000243410" description="Large ribosomal subunit protein bL12">
    <location>
        <begin position="1"/>
        <end position="123"/>
    </location>
</feature>
<dbReference type="EMBL" id="AE016825">
    <property type="protein sequence ID" value="AAQ61854.1"/>
    <property type="molecule type" value="Genomic_DNA"/>
</dbReference>
<dbReference type="RefSeq" id="WP_011137741.1">
    <property type="nucleotide sequence ID" value="NC_005085.1"/>
</dbReference>
<dbReference type="SMR" id="Q7NQE5"/>
<dbReference type="STRING" id="243365.CV_4194"/>
<dbReference type="GeneID" id="66366334"/>
<dbReference type="KEGG" id="cvi:CV_4194"/>
<dbReference type="eggNOG" id="COG0222">
    <property type="taxonomic scope" value="Bacteria"/>
</dbReference>
<dbReference type="HOGENOM" id="CLU_086499_3_2_4"/>
<dbReference type="OrthoDB" id="9811748at2"/>
<dbReference type="Proteomes" id="UP000001424">
    <property type="component" value="Chromosome"/>
</dbReference>
<dbReference type="GO" id="GO:0022625">
    <property type="term" value="C:cytosolic large ribosomal subunit"/>
    <property type="evidence" value="ECO:0007669"/>
    <property type="project" value="TreeGrafter"/>
</dbReference>
<dbReference type="GO" id="GO:0003729">
    <property type="term" value="F:mRNA binding"/>
    <property type="evidence" value="ECO:0007669"/>
    <property type="project" value="TreeGrafter"/>
</dbReference>
<dbReference type="GO" id="GO:0003735">
    <property type="term" value="F:structural constituent of ribosome"/>
    <property type="evidence" value="ECO:0007669"/>
    <property type="project" value="InterPro"/>
</dbReference>
<dbReference type="GO" id="GO:0006412">
    <property type="term" value="P:translation"/>
    <property type="evidence" value="ECO:0007669"/>
    <property type="project" value="UniProtKB-UniRule"/>
</dbReference>
<dbReference type="CDD" id="cd00387">
    <property type="entry name" value="Ribosomal_L7_L12"/>
    <property type="match status" value="1"/>
</dbReference>
<dbReference type="FunFam" id="1.20.5.710:FF:000003">
    <property type="entry name" value="50S ribosomal protein L7/L12"/>
    <property type="match status" value="1"/>
</dbReference>
<dbReference type="FunFam" id="3.30.1390.10:FF:000001">
    <property type="entry name" value="50S ribosomal protein L7/L12"/>
    <property type="match status" value="1"/>
</dbReference>
<dbReference type="Gene3D" id="3.30.1390.10">
    <property type="match status" value="1"/>
</dbReference>
<dbReference type="Gene3D" id="1.20.5.710">
    <property type="entry name" value="Single helix bin"/>
    <property type="match status" value="1"/>
</dbReference>
<dbReference type="HAMAP" id="MF_00368">
    <property type="entry name" value="Ribosomal_bL12"/>
    <property type="match status" value="1"/>
</dbReference>
<dbReference type="InterPro" id="IPR000206">
    <property type="entry name" value="Ribosomal_bL12"/>
</dbReference>
<dbReference type="InterPro" id="IPR013823">
    <property type="entry name" value="Ribosomal_bL12_C"/>
</dbReference>
<dbReference type="InterPro" id="IPR014719">
    <property type="entry name" value="Ribosomal_bL12_C/ClpS-like"/>
</dbReference>
<dbReference type="InterPro" id="IPR008932">
    <property type="entry name" value="Ribosomal_bL12_oligo"/>
</dbReference>
<dbReference type="InterPro" id="IPR036235">
    <property type="entry name" value="Ribosomal_bL12_oligo_N_sf"/>
</dbReference>
<dbReference type="NCBIfam" id="TIGR00855">
    <property type="entry name" value="L12"/>
    <property type="match status" value="1"/>
</dbReference>
<dbReference type="PANTHER" id="PTHR45987">
    <property type="entry name" value="39S RIBOSOMAL PROTEIN L12"/>
    <property type="match status" value="1"/>
</dbReference>
<dbReference type="PANTHER" id="PTHR45987:SF4">
    <property type="entry name" value="LARGE RIBOSOMAL SUBUNIT PROTEIN BL12M"/>
    <property type="match status" value="1"/>
</dbReference>
<dbReference type="Pfam" id="PF00542">
    <property type="entry name" value="Ribosomal_L12"/>
    <property type="match status" value="1"/>
</dbReference>
<dbReference type="Pfam" id="PF16320">
    <property type="entry name" value="Ribosomal_L12_N"/>
    <property type="match status" value="1"/>
</dbReference>
<dbReference type="SUPFAM" id="SSF54736">
    <property type="entry name" value="ClpS-like"/>
    <property type="match status" value="1"/>
</dbReference>
<dbReference type="SUPFAM" id="SSF48300">
    <property type="entry name" value="Ribosomal protein L7/12, oligomerisation (N-terminal) domain"/>
    <property type="match status" value="1"/>
</dbReference>
<keyword id="KW-1185">Reference proteome</keyword>
<keyword id="KW-0687">Ribonucleoprotein</keyword>
<keyword id="KW-0689">Ribosomal protein</keyword>
<gene>
    <name evidence="1" type="primary">rplL</name>
    <name type="ordered locus">CV_4194</name>
</gene>
<evidence type="ECO:0000255" key="1">
    <source>
        <dbReference type="HAMAP-Rule" id="MF_00368"/>
    </source>
</evidence>
<evidence type="ECO:0000305" key="2"/>
<sequence>MAITKEDILEAVAGLTVMELNDLVKAFEEKFGVSAAAVAVAGPAGAGAAAAEEKTEFDVVLSAAGDNKVGVIKVVRAITGLGLKEAKDLVDGAPKNVKEGVAKAEAEDIVKQLTEAGAKAEIK</sequence>
<name>RL7_CHRVO</name>
<proteinExistence type="inferred from homology"/>
<organism>
    <name type="scientific">Chromobacterium violaceum (strain ATCC 12472 / DSM 30191 / JCM 1249 / CCUG 213 / NBRC 12614 / NCIMB 9131 / NCTC 9757 / MK)</name>
    <dbReference type="NCBI Taxonomy" id="243365"/>
    <lineage>
        <taxon>Bacteria</taxon>
        <taxon>Pseudomonadati</taxon>
        <taxon>Pseudomonadota</taxon>
        <taxon>Betaproteobacteria</taxon>
        <taxon>Neisseriales</taxon>
        <taxon>Chromobacteriaceae</taxon>
        <taxon>Chromobacterium</taxon>
    </lineage>
</organism>
<protein>
    <recommendedName>
        <fullName evidence="1">Large ribosomal subunit protein bL12</fullName>
    </recommendedName>
    <alternativeName>
        <fullName evidence="2">50S ribosomal protein L7/L12</fullName>
    </alternativeName>
</protein>
<reference key="1">
    <citation type="journal article" date="2003" name="Proc. Natl. Acad. Sci. U.S.A.">
        <title>The complete genome sequence of Chromobacterium violaceum reveals remarkable and exploitable bacterial adaptability.</title>
        <authorList>
            <person name="Vasconcelos A.T.R."/>
            <person name="de Almeida D.F."/>
            <person name="Hungria M."/>
            <person name="Guimaraes C.T."/>
            <person name="Antonio R.V."/>
            <person name="Almeida F.C."/>
            <person name="de Almeida L.G.P."/>
            <person name="de Almeida R."/>
            <person name="Alves-Gomes J.A."/>
            <person name="Andrade E.M."/>
            <person name="Araripe J."/>
            <person name="de Araujo M.F.F."/>
            <person name="Astolfi-Filho S."/>
            <person name="Azevedo V."/>
            <person name="Baptista A.J."/>
            <person name="Bataus L.A.M."/>
            <person name="Batista J.S."/>
            <person name="Belo A."/>
            <person name="van den Berg C."/>
            <person name="Bogo M."/>
            <person name="Bonatto S."/>
            <person name="Bordignon J."/>
            <person name="Brigido M.M."/>
            <person name="Brito C.A."/>
            <person name="Brocchi M."/>
            <person name="Burity H.A."/>
            <person name="Camargo A.A."/>
            <person name="Cardoso D.D.P."/>
            <person name="Carneiro N.P."/>
            <person name="Carraro D.M."/>
            <person name="Carvalho C.M.B."/>
            <person name="Cascardo J.C.M."/>
            <person name="Cavada B.S."/>
            <person name="Chueire L.M.O."/>
            <person name="Creczynski-Pasa T.B."/>
            <person name="Cunha-Junior N.C."/>
            <person name="Fagundes N."/>
            <person name="Falcao C.L."/>
            <person name="Fantinatti F."/>
            <person name="Farias I.P."/>
            <person name="Felipe M.S.S."/>
            <person name="Ferrari L.P."/>
            <person name="Ferro J.A."/>
            <person name="Ferro M.I.T."/>
            <person name="Franco G.R."/>
            <person name="Freitas N.S.A."/>
            <person name="Furlan L.R."/>
            <person name="Gazzinelli R.T."/>
            <person name="Gomes E.A."/>
            <person name="Goncalves P.R."/>
            <person name="Grangeiro T.B."/>
            <person name="Grattapaglia D."/>
            <person name="Grisard E.C."/>
            <person name="Hanna E.S."/>
            <person name="Jardim S.N."/>
            <person name="Laurino J."/>
            <person name="Leoi L.C.T."/>
            <person name="Lima L.F.A."/>
            <person name="Loureiro M.F."/>
            <person name="Lyra M.C.C.P."/>
            <person name="Madeira H.M.F."/>
            <person name="Manfio G.P."/>
            <person name="Maranhao A.Q."/>
            <person name="Martins W.S."/>
            <person name="di Mauro S.M.Z."/>
            <person name="de Medeiros S.R.B."/>
            <person name="Meissner R.V."/>
            <person name="Moreira M.A.M."/>
            <person name="Nascimento F.F."/>
            <person name="Nicolas M.F."/>
            <person name="Oliveira J.G."/>
            <person name="Oliveira S.C."/>
            <person name="Paixao R.F.C."/>
            <person name="Parente J.A."/>
            <person name="Pedrosa F.O."/>
            <person name="Pena S.D.J."/>
            <person name="Pereira J.O."/>
            <person name="Pereira M."/>
            <person name="Pinto L.S.R.C."/>
            <person name="Pinto L.S."/>
            <person name="Porto J.I.R."/>
            <person name="Potrich D.P."/>
            <person name="Ramalho-Neto C.E."/>
            <person name="Reis A.M.M."/>
            <person name="Rigo L.U."/>
            <person name="Rondinelli E."/>
            <person name="Santos E.B.P."/>
            <person name="Santos F.R."/>
            <person name="Schneider M.P.C."/>
            <person name="Seuanez H.N."/>
            <person name="Silva A.M.R."/>
            <person name="da Silva A.L.C."/>
            <person name="Silva D.W."/>
            <person name="Silva R."/>
            <person name="Simoes I.C."/>
            <person name="Simon D."/>
            <person name="Soares C.M.A."/>
            <person name="Soares R.B.A."/>
            <person name="Souza E.M."/>
            <person name="Souza K.R.L."/>
            <person name="Souza R.C."/>
            <person name="Steffens M.B.R."/>
            <person name="Steindel M."/>
            <person name="Teixeira S.R."/>
            <person name="Urmenyi T."/>
            <person name="Vettore A."/>
            <person name="Wassem R."/>
            <person name="Zaha A."/>
            <person name="Simpson A.J.G."/>
        </authorList>
    </citation>
    <scope>NUCLEOTIDE SEQUENCE [LARGE SCALE GENOMIC DNA]</scope>
    <source>
        <strain>ATCC 12472 / DSM 30191 / JCM 1249 / CCUG 213 / NBRC 12614 / NCIMB 9131 / NCTC 9757 / MK</strain>
    </source>
</reference>
<comment type="function">
    <text evidence="1">Forms part of the ribosomal stalk which helps the ribosome interact with GTP-bound translation factors. Is thus essential for accurate translation.</text>
</comment>
<comment type="subunit">
    <text evidence="1">Homodimer. Part of the ribosomal stalk of the 50S ribosomal subunit. Forms a multimeric L10(L12)X complex, where L10 forms an elongated spine to which 2 to 4 L12 dimers bind in a sequential fashion. Binds GTP-bound translation factors.</text>
</comment>
<comment type="similarity">
    <text evidence="1">Belongs to the bacterial ribosomal protein bL12 family.</text>
</comment>